<name>CYB_MICAB</name>
<organism>
    <name type="scientific">Microtus abbreviatus</name>
    <name type="common">Insular vole</name>
    <dbReference type="NCBI Taxonomy" id="100894"/>
    <lineage>
        <taxon>Eukaryota</taxon>
        <taxon>Metazoa</taxon>
        <taxon>Chordata</taxon>
        <taxon>Craniata</taxon>
        <taxon>Vertebrata</taxon>
        <taxon>Euteleostomi</taxon>
        <taxon>Mammalia</taxon>
        <taxon>Eutheria</taxon>
        <taxon>Euarchontoglires</taxon>
        <taxon>Glires</taxon>
        <taxon>Rodentia</taxon>
        <taxon>Myomorpha</taxon>
        <taxon>Muroidea</taxon>
        <taxon>Cricetidae</taxon>
        <taxon>Arvicolinae</taxon>
        <taxon>Microtus</taxon>
    </lineage>
</organism>
<gene>
    <name type="primary">MT-CYB</name>
    <name type="synonym">COB</name>
    <name type="synonym">CYTB</name>
    <name type="synonym">MTCYB</name>
</gene>
<protein>
    <recommendedName>
        <fullName>Cytochrome b</fullName>
    </recommendedName>
    <alternativeName>
        <fullName>Complex III subunit 3</fullName>
    </alternativeName>
    <alternativeName>
        <fullName>Complex III subunit III</fullName>
    </alternativeName>
    <alternativeName>
        <fullName>Cytochrome b-c1 complex subunit 3</fullName>
    </alternativeName>
    <alternativeName>
        <fullName>Ubiquinol-cytochrome-c reductase complex cytochrome b subunit</fullName>
    </alternativeName>
</protein>
<evidence type="ECO:0000250" key="1"/>
<evidence type="ECO:0000250" key="2">
    <source>
        <dbReference type="UniProtKB" id="P00157"/>
    </source>
</evidence>
<evidence type="ECO:0000255" key="3">
    <source>
        <dbReference type="PROSITE-ProRule" id="PRU00967"/>
    </source>
</evidence>
<evidence type="ECO:0000255" key="4">
    <source>
        <dbReference type="PROSITE-ProRule" id="PRU00968"/>
    </source>
</evidence>
<sequence length="380" mass="42784">MTIIRKKHPLIKIINHSFIDLPAPSNISSWWNFGSLLGLCLVTQILTGLFLAMHYTSDTATAFSSVAHICRDVNYGWLIRYMHANGASMFFICLFLHVGRGVYYGSYNMIETWNMGIILLFAVMATAFMGYVLPWGQMSFWGATVITNLLSAIPYIGTTLVEWIWGGFSVDKATLTRFFAFHFILPFIITALVLVHLLFLHETGSNNPTGLNSDSDKIPFHPYYTIKDFLGVLILLMAFMILTLFFPDILGDPDNYTPANPLNTPPHIKPEWYFLFAYAILRSIPNKLGGVLALILSILILALMPLLHTSKQRALTFRPITQTMYWVLVADLLILTWIGGQPVEYPFIIIGQTASIAYFAIIVILMPIAGMIENNILDLD</sequence>
<dbReference type="EMBL" id="AF163890">
    <property type="protein sequence ID" value="AAF97414.1"/>
    <property type="molecule type" value="Genomic_DNA"/>
</dbReference>
<dbReference type="SMR" id="Q9MI39"/>
<dbReference type="GO" id="GO:0005743">
    <property type="term" value="C:mitochondrial inner membrane"/>
    <property type="evidence" value="ECO:0007669"/>
    <property type="project" value="UniProtKB-SubCell"/>
</dbReference>
<dbReference type="GO" id="GO:0045275">
    <property type="term" value="C:respiratory chain complex III"/>
    <property type="evidence" value="ECO:0007669"/>
    <property type="project" value="InterPro"/>
</dbReference>
<dbReference type="GO" id="GO:0046872">
    <property type="term" value="F:metal ion binding"/>
    <property type="evidence" value="ECO:0007669"/>
    <property type="project" value="UniProtKB-KW"/>
</dbReference>
<dbReference type="GO" id="GO:0008121">
    <property type="term" value="F:ubiquinol-cytochrome-c reductase activity"/>
    <property type="evidence" value="ECO:0007669"/>
    <property type="project" value="InterPro"/>
</dbReference>
<dbReference type="GO" id="GO:0006122">
    <property type="term" value="P:mitochondrial electron transport, ubiquinol to cytochrome c"/>
    <property type="evidence" value="ECO:0007669"/>
    <property type="project" value="TreeGrafter"/>
</dbReference>
<dbReference type="CDD" id="cd00290">
    <property type="entry name" value="cytochrome_b_C"/>
    <property type="match status" value="1"/>
</dbReference>
<dbReference type="CDD" id="cd00284">
    <property type="entry name" value="Cytochrome_b_N"/>
    <property type="match status" value="1"/>
</dbReference>
<dbReference type="FunFam" id="1.20.810.10:FF:000002">
    <property type="entry name" value="Cytochrome b"/>
    <property type="match status" value="1"/>
</dbReference>
<dbReference type="Gene3D" id="1.20.810.10">
    <property type="entry name" value="Cytochrome Bc1 Complex, Chain C"/>
    <property type="match status" value="1"/>
</dbReference>
<dbReference type="InterPro" id="IPR005798">
    <property type="entry name" value="Cyt_b/b6_C"/>
</dbReference>
<dbReference type="InterPro" id="IPR036150">
    <property type="entry name" value="Cyt_b/b6_C_sf"/>
</dbReference>
<dbReference type="InterPro" id="IPR005797">
    <property type="entry name" value="Cyt_b/b6_N"/>
</dbReference>
<dbReference type="InterPro" id="IPR027387">
    <property type="entry name" value="Cytb/b6-like_sf"/>
</dbReference>
<dbReference type="InterPro" id="IPR030689">
    <property type="entry name" value="Cytochrome_b"/>
</dbReference>
<dbReference type="InterPro" id="IPR048260">
    <property type="entry name" value="Cytochrome_b_C_euk/bac"/>
</dbReference>
<dbReference type="InterPro" id="IPR048259">
    <property type="entry name" value="Cytochrome_b_N_euk/bac"/>
</dbReference>
<dbReference type="InterPro" id="IPR016174">
    <property type="entry name" value="Di-haem_cyt_TM"/>
</dbReference>
<dbReference type="PANTHER" id="PTHR19271">
    <property type="entry name" value="CYTOCHROME B"/>
    <property type="match status" value="1"/>
</dbReference>
<dbReference type="PANTHER" id="PTHR19271:SF16">
    <property type="entry name" value="CYTOCHROME B"/>
    <property type="match status" value="1"/>
</dbReference>
<dbReference type="Pfam" id="PF00032">
    <property type="entry name" value="Cytochrom_B_C"/>
    <property type="match status" value="1"/>
</dbReference>
<dbReference type="Pfam" id="PF00033">
    <property type="entry name" value="Cytochrome_B"/>
    <property type="match status" value="1"/>
</dbReference>
<dbReference type="PIRSF" id="PIRSF038885">
    <property type="entry name" value="COB"/>
    <property type="match status" value="1"/>
</dbReference>
<dbReference type="SUPFAM" id="SSF81648">
    <property type="entry name" value="a domain/subunit of cytochrome bc1 complex (Ubiquinol-cytochrome c reductase)"/>
    <property type="match status" value="1"/>
</dbReference>
<dbReference type="SUPFAM" id="SSF81342">
    <property type="entry name" value="Transmembrane di-heme cytochromes"/>
    <property type="match status" value="1"/>
</dbReference>
<dbReference type="PROSITE" id="PS51003">
    <property type="entry name" value="CYTB_CTER"/>
    <property type="match status" value="1"/>
</dbReference>
<dbReference type="PROSITE" id="PS51002">
    <property type="entry name" value="CYTB_NTER"/>
    <property type="match status" value="1"/>
</dbReference>
<keyword id="KW-0249">Electron transport</keyword>
<keyword id="KW-0349">Heme</keyword>
<keyword id="KW-0408">Iron</keyword>
<keyword id="KW-0472">Membrane</keyword>
<keyword id="KW-0479">Metal-binding</keyword>
<keyword id="KW-0496">Mitochondrion</keyword>
<keyword id="KW-0999">Mitochondrion inner membrane</keyword>
<keyword id="KW-0679">Respiratory chain</keyword>
<keyword id="KW-0812">Transmembrane</keyword>
<keyword id="KW-1133">Transmembrane helix</keyword>
<keyword id="KW-0813">Transport</keyword>
<keyword id="KW-0830">Ubiquinone</keyword>
<accession>Q9MI39</accession>
<feature type="chain" id="PRO_0000255072" description="Cytochrome b">
    <location>
        <begin position="1"/>
        <end position="380"/>
    </location>
</feature>
<feature type="transmembrane region" description="Helical" evidence="2">
    <location>
        <begin position="33"/>
        <end position="53"/>
    </location>
</feature>
<feature type="transmembrane region" description="Helical" evidence="2">
    <location>
        <begin position="77"/>
        <end position="98"/>
    </location>
</feature>
<feature type="transmembrane region" description="Helical" evidence="2">
    <location>
        <begin position="113"/>
        <end position="133"/>
    </location>
</feature>
<feature type="transmembrane region" description="Helical" evidence="2">
    <location>
        <begin position="178"/>
        <end position="198"/>
    </location>
</feature>
<feature type="transmembrane region" description="Helical" evidence="2">
    <location>
        <begin position="226"/>
        <end position="246"/>
    </location>
</feature>
<feature type="transmembrane region" description="Helical" evidence="2">
    <location>
        <begin position="288"/>
        <end position="308"/>
    </location>
</feature>
<feature type="transmembrane region" description="Helical" evidence="2">
    <location>
        <begin position="320"/>
        <end position="340"/>
    </location>
</feature>
<feature type="transmembrane region" description="Helical" evidence="2">
    <location>
        <begin position="347"/>
        <end position="367"/>
    </location>
</feature>
<feature type="binding site" description="axial binding residue" evidence="2">
    <location>
        <position position="83"/>
    </location>
    <ligand>
        <name>heme b</name>
        <dbReference type="ChEBI" id="CHEBI:60344"/>
        <label>b562</label>
    </ligand>
    <ligandPart>
        <name>Fe</name>
        <dbReference type="ChEBI" id="CHEBI:18248"/>
    </ligandPart>
</feature>
<feature type="binding site" description="axial binding residue" evidence="2">
    <location>
        <position position="97"/>
    </location>
    <ligand>
        <name>heme b</name>
        <dbReference type="ChEBI" id="CHEBI:60344"/>
        <label>b566</label>
    </ligand>
    <ligandPart>
        <name>Fe</name>
        <dbReference type="ChEBI" id="CHEBI:18248"/>
    </ligandPart>
</feature>
<feature type="binding site" description="axial binding residue" evidence="2">
    <location>
        <position position="182"/>
    </location>
    <ligand>
        <name>heme b</name>
        <dbReference type="ChEBI" id="CHEBI:60344"/>
        <label>b562</label>
    </ligand>
    <ligandPart>
        <name>Fe</name>
        <dbReference type="ChEBI" id="CHEBI:18248"/>
    </ligandPart>
</feature>
<feature type="binding site" description="axial binding residue" evidence="2">
    <location>
        <position position="196"/>
    </location>
    <ligand>
        <name>heme b</name>
        <dbReference type="ChEBI" id="CHEBI:60344"/>
        <label>b566</label>
    </ligand>
    <ligandPart>
        <name>Fe</name>
        <dbReference type="ChEBI" id="CHEBI:18248"/>
    </ligandPart>
</feature>
<feature type="binding site" evidence="2">
    <location>
        <position position="201"/>
    </location>
    <ligand>
        <name>a ubiquinone</name>
        <dbReference type="ChEBI" id="CHEBI:16389"/>
    </ligand>
</feature>
<comment type="function">
    <text evidence="2">Component of the ubiquinol-cytochrome c reductase complex (complex III or cytochrome b-c1 complex) that is part of the mitochondrial respiratory chain. The b-c1 complex mediates electron transfer from ubiquinol to cytochrome c. Contributes to the generation of a proton gradient across the mitochondrial membrane that is then used for ATP synthesis.</text>
</comment>
<comment type="cofactor">
    <cofactor evidence="2">
        <name>heme b</name>
        <dbReference type="ChEBI" id="CHEBI:60344"/>
    </cofactor>
    <text evidence="2">Binds 2 heme b groups non-covalently.</text>
</comment>
<comment type="subunit">
    <text evidence="2">The cytochrome bc1 complex contains 11 subunits: 3 respiratory subunits (MT-CYB, CYC1 and UQCRFS1), 2 core proteins (UQCRC1 and UQCRC2) and 6 low-molecular weight proteins (UQCRH/QCR6, UQCRB/QCR7, UQCRQ/QCR8, UQCR10/QCR9, UQCR11/QCR10 and a cleavage product of UQCRFS1). This cytochrome bc1 complex then forms a dimer.</text>
</comment>
<comment type="subcellular location">
    <subcellularLocation>
        <location evidence="2">Mitochondrion inner membrane</location>
        <topology evidence="2">Multi-pass membrane protein</topology>
    </subcellularLocation>
</comment>
<comment type="miscellaneous">
    <text evidence="1">Heme 1 (or BL or b562) is low-potential and absorbs at about 562 nm, and heme 2 (or BH or b566) is high-potential and absorbs at about 566 nm.</text>
</comment>
<comment type="similarity">
    <text evidence="3 4">Belongs to the cytochrome b family.</text>
</comment>
<comment type="caution">
    <text evidence="2">The full-length protein contains only eight transmembrane helices, not nine as predicted by bioinformatics tools.</text>
</comment>
<reference key="1">
    <citation type="journal article" date="2000" name="J. Mammal.">
        <title>Molecular systematics of a holarctic rodent (Microtus, Muridae).</title>
        <authorList>
            <person name="Conroy C.J."/>
            <person name="Cook J.A."/>
        </authorList>
    </citation>
    <scope>NUCLEOTIDE SEQUENCE [GENOMIC DNA]</scope>
</reference>
<geneLocation type="mitochondrion"/>
<proteinExistence type="inferred from homology"/>